<protein>
    <recommendedName>
        <fullName>Tetratricopeptide repeat protein 30 homolog</fullName>
        <shortName>TPR repeat protein 30 homolog</shortName>
    </recommendedName>
</protein>
<sequence>MLHQGIILREGHVTRTIYNLIKDKRYEDVIECITSFGEAANTRAGLSTLGHCYYHAQKYEEAATCYEQLCQLAPKEAKYRFYYAQSLYQAGIFADALRVLKQMGDQEDELREQCLQLQSAILYSSEDFAGAQSLLNQRAGGTADTLNDEGCLLFQADQHEAAVQRFQAALQVGGFNPLVAYNVALAHFQKKQRAQALDYTSEIVERGMRNHPELGIGAQMDIPDGGARSVGNPITMAISGITQALNLKAAIEFQDGNEEAARDALLDLPPRAESELDPVTLHNMALTDVEGPVAGLRKLAFLLELGAPSCPKETFANILLICCKNELYETAADILAEHTDLTYKYLSQYLYELLDSLITAQTSAELAEKKLGTLASSLAGKLRSLAAKVQEVRATNEQQALRDALKDYEQALELYLPVVMARAWISWRDDDFVGAEREFHASAEFCSENSIWRLNAGHVLFMQGDKYNEAAAFYEPIVRQHSDDIMSVSAAVLANLCVSYIMTFQNEEAEELMRKVEKAEEMKGNLGKQYHHLCIVNLVVGTLYCAKSNYEFGLSRIAHALESGSGNRLYADTWLHVKHCILGLLTGMAKQNIILPYATVQEVLNFLRFCESYGLFTPANIFSATEQVPEEPLTIGLEARKLRLLLIKLSEYDNF</sequence>
<reference key="1">
    <citation type="journal article" date="2000" name="Science">
        <title>The genome sequence of Drosophila melanogaster.</title>
        <authorList>
            <person name="Adams M.D."/>
            <person name="Celniker S.E."/>
            <person name="Holt R.A."/>
            <person name="Evans C.A."/>
            <person name="Gocayne J.D."/>
            <person name="Amanatides P.G."/>
            <person name="Scherer S.E."/>
            <person name="Li P.W."/>
            <person name="Hoskins R.A."/>
            <person name="Galle R.F."/>
            <person name="George R.A."/>
            <person name="Lewis S.E."/>
            <person name="Richards S."/>
            <person name="Ashburner M."/>
            <person name="Henderson S.N."/>
            <person name="Sutton G.G."/>
            <person name="Wortman J.R."/>
            <person name="Yandell M.D."/>
            <person name="Zhang Q."/>
            <person name="Chen L.X."/>
            <person name="Brandon R.C."/>
            <person name="Rogers Y.-H.C."/>
            <person name="Blazej R.G."/>
            <person name="Champe M."/>
            <person name="Pfeiffer B.D."/>
            <person name="Wan K.H."/>
            <person name="Doyle C."/>
            <person name="Baxter E.G."/>
            <person name="Helt G."/>
            <person name="Nelson C.R."/>
            <person name="Miklos G.L.G."/>
            <person name="Abril J.F."/>
            <person name="Agbayani A."/>
            <person name="An H.-J."/>
            <person name="Andrews-Pfannkoch C."/>
            <person name="Baldwin D."/>
            <person name="Ballew R.M."/>
            <person name="Basu A."/>
            <person name="Baxendale J."/>
            <person name="Bayraktaroglu L."/>
            <person name="Beasley E.M."/>
            <person name="Beeson K.Y."/>
            <person name="Benos P.V."/>
            <person name="Berman B.P."/>
            <person name="Bhandari D."/>
            <person name="Bolshakov S."/>
            <person name="Borkova D."/>
            <person name="Botchan M.R."/>
            <person name="Bouck J."/>
            <person name="Brokstein P."/>
            <person name="Brottier P."/>
            <person name="Burtis K.C."/>
            <person name="Busam D.A."/>
            <person name="Butler H."/>
            <person name="Cadieu E."/>
            <person name="Center A."/>
            <person name="Chandra I."/>
            <person name="Cherry J.M."/>
            <person name="Cawley S."/>
            <person name="Dahlke C."/>
            <person name="Davenport L.B."/>
            <person name="Davies P."/>
            <person name="de Pablos B."/>
            <person name="Delcher A."/>
            <person name="Deng Z."/>
            <person name="Mays A.D."/>
            <person name="Dew I."/>
            <person name="Dietz S.M."/>
            <person name="Dodson K."/>
            <person name="Doup L.E."/>
            <person name="Downes M."/>
            <person name="Dugan-Rocha S."/>
            <person name="Dunkov B.C."/>
            <person name="Dunn P."/>
            <person name="Durbin K.J."/>
            <person name="Evangelista C.C."/>
            <person name="Ferraz C."/>
            <person name="Ferriera S."/>
            <person name="Fleischmann W."/>
            <person name="Fosler C."/>
            <person name="Gabrielian A.E."/>
            <person name="Garg N.S."/>
            <person name="Gelbart W.M."/>
            <person name="Glasser K."/>
            <person name="Glodek A."/>
            <person name="Gong F."/>
            <person name="Gorrell J.H."/>
            <person name="Gu Z."/>
            <person name="Guan P."/>
            <person name="Harris M."/>
            <person name="Harris N.L."/>
            <person name="Harvey D.A."/>
            <person name="Heiman T.J."/>
            <person name="Hernandez J.R."/>
            <person name="Houck J."/>
            <person name="Hostin D."/>
            <person name="Houston K.A."/>
            <person name="Howland T.J."/>
            <person name="Wei M.-H."/>
            <person name="Ibegwam C."/>
            <person name="Jalali M."/>
            <person name="Kalush F."/>
            <person name="Karpen G.H."/>
            <person name="Ke Z."/>
            <person name="Kennison J.A."/>
            <person name="Ketchum K.A."/>
            <person name="Kimmel B.E."/>
            <person name="Kodira C.D."/>
            <person name="Kraft C.L."/>
            <person name="Kravitz S."/>
            <person name="Kulp D."/>
            <person name="Lai Z."/>
            <person name="Lasko P."/>
            <person name="Lei Y."/>
            <person name="Levitsky A.A."/>
            <person name="Li J.H."/>
            <person name="Li Z."/>
            <person name="Liang Y."/>
            <person name="Lin X."/>
            <person name="Liu X."/>
            <person name="Mattei B."/>
            <person name="McIntosh T.C."/>
            <person name="McLeod M.P."/>
            <person name="McPherson D."/>
            <person name="Merkulov G."/>
            <person name="Milshina N.V."/>
            <person name="Mobarry C."/>
            <person name="Morris J."/>
            <person name="Moshrefi A."/>
            <person name="Mount S.M."/>
            <person name="Moy M."/>
            <person name="Murphy B."/>
            <person name="Murphy L."/>
            <person name="Muzny D.M."/>
            <person name="Nelson D.L."/>
            <person name="Nelson D.R."/>
            <person name="Nelson K.A."/>
            <person name="Nixon K."/>
            <person name="Nusskern D.R."/>
            <person name="Pacleb J.M."/>
            <person name="Palazzolo M."/>
            <person name="Pittman G.S."/>
            <person name="Pan S."/>
            <person name="Pollard J."/>
            <person name="Puri V."/>
            <person name="Reese M.G."/>
            <person name="Reinert K."/>
            <person name="Remington K."/>
            <person name="Saunders R.D.C."/>
            <person name="Scheeler F."/>
            <person name="Shen H."/>
            <person name="Shue B.C."/>
            <person name="Siden-Kiamos I."/>
            <person name="Simpson M."/>
            <person name="Skupski M.P."/>
            <person name="Smith T.J."/>
            <person name="Spier E."/>
            <person name="Spradling A.C."/>
            <person name="Stapleton M."/>
            <person name="Strong R."/>
            <person name="Sun E."/>
            <person name="Svirskas R."/>
            <person name="Tector C."/>
            <person name="Turner R."/>
            <person name="Venter E."/>
            <person name="Wang A.H."/>
            <person name="Wang X."/>
            <person name="Wang Z.-Y."/>
            <person name="Wassarman D.A."/>
            <person name="Weinstock G.M."/>
            <person name="Weissenbach J."/>
            <person name="Williams S.M."/>
            <person name="Woodage T."/>
            <person name="Worley K.C."/>
            <person name="Wu D."/>
            <person name="Yang S."/>
            <person name="Yao Q.A."/>
            <person name="Ye J."/>
            <person name="Yeh R.-F."/>
            <person name="Zaveri J.S."/>
            <person name="Zhan M."/>
            <person name="Zhang G."/>
            <person name="Zhao Q."/>
            <person name="Zheng L."/>
            <person name="Zheng X.H."/>
            <person name="Zhong F.N."/>
            <person name="Zhong W."/>
            <person name="Zhou X."/>
            <person name="Zhu S.C."/>
            <person name="Zhu X."/>
            <person name="Smith H.O."/>
            <person name="Gibbs R.A."/>
            <person name="Myers E.W."/>
            <person name="Rubin G.M."/>
            <person name="Venter J.C."/>
        </authorList>
    </citation>
    <scope>NUCLEOTIDE SEQUENCE [LARGE SCALE GENOMIC DNA]</scope>
    <source>
        <strain>Berkeley</strain>
    </source>
</reference>
<reference key="2">
    <citation type="journal article" date="2002" name="Genome Biol.">
        <title>Annotation of the Drosophila melanogaster euchromatic genome: a systematic review.</title>
        <authorList>
            <person name="Misra S."/>
            <person name="Crosby M.A."/>
            <person name="Mungall C.J."/>
            <person name="Matthews B.B."/>
            <person name="Campbell K.S."/>
            <person name="Hradecky P."/>
            <person name="Huang Y."/>
            <person name="Kaminker J.S."/>
            <person name="Millburn G.H."/>
            <person name="Prochnik S.E."/>
            <person name="Smith C.D."/>
            <person name="Tupy J.L."/>
            <person name="Whitfield E.J."/>
            <person name="Bayraktaroglu L."/>
            <person name="Berman B.P."/>
            <person name="Bettencourt B.R."/>
            <person name="Celniker S.E."/>
            <person name="de Grey A.D.N.J."/>
            <person name="Drysdale R.A."/>
            <person name="Harris N.L."/>
            <person name="Richter J."/>
            <person name="Russo S."/>
            <person name="Schroeder A.J."/>
            <person name="Shu S.Q."/>
            <person name="Stapleton M."/>
            <person name="Yamada C."/>
            <person name="Ashburner M."/>
            <person name="Gelbart W.M."/>
            <person name="Rubin G.M."/>
            <person name="Lewis S.E."/>
        </authorList>
    </citation>
    <scope>GENOME REANNOTATION</scope>
    <source>
        <strain>Berkeley</strain>
    </source>
</reference>
<reference key="3">
    <citation type="submission" date="2005-05" db="EMBL/GenBank/DDBJ databases">
        <authorList>
            <person name="Stapleton M."/>
            <person name="Carlson J.W."/>
            <person name="Chavez C."/>
            <person name="Frise E."/>
            <person name="George R.A."/>
            <person name="Pacleb J.M."/>
            <person name="Park S."/>
            <person name="Wan K.H."/>
            <person name="Yu C."/>
            <person name="Celniker S.E."/>
        </authorList>
    </citation>
    <scope>NUCLEOTIDE SEQUENCE [LARGE SCALE MRNA]</scope>
    <source>
        <strain>Berkeley</strain>
    </source>
</reference>
<dbReference type="EMBL" id="AE014134">
    <property type="protein sequence ID" value="AAF53241.3"/>
    <property type="molecule type" value="Genomic_DNA"/>
</dbReference>
<dbReference type="EMBL" id="BT022762">
    <property type="protein sequence ID" value="AAY55178.1"/>
    <property type="status" value="ALT_INIT"/>
    <property type="molecule type" value="mRNA"/>
</dbReference>
<dbReference type="EMBL" id="BT022771">
    <property type="protein sequence ID" value="AAY55187.1"/>
    <property type="status" value="ALT_INIT"/>
    <property type="molecule type" value="mRNA"/>
</dbReference>
<dbReference type="EMBL" id="BT022794">
    <property type="protein sequence ID" value="AAY55210.1"/>
    <property type="status" value="ALT_INIT"/>
    <property type="molecule type" value="mRNA"/>
</dbReference>
<dbReference type="EMBL" id="BT022802">
    <property type="protein sequence ID" value="AAY55218.1"/>
    <property type="status" value="ALT_INIT"/>
    <property type="molecule type" value="mRNA"/>
</dbReference>
<dbReference type="RefSeq" id="NP_001097155.2">
    <property type="nucleotide sequence ID" value="NM_001103685.3"/>
</dbReference>
<dbReference type="RefSeq" id="NP_001260430.1">
    <property type="nucleotide sequence ID" value="NM_001273501.1"/>
</dbReference>
<dbReference type="SMR" id="Q9VK41"/>
<dbReference type="ComplexPortal" id="CPX-2704">
    <property type="entry name" value="Intraflagellar transport complex B"/>
</dbReference>
<dbReference type="FunCoup" id="Q9VK41">
    <property type="interactions" value="46"/>
</dbReference>
<dbReference type="STRING" id="7227.FBpp0307812"/>
<dbReference type="PaxDb" id="7227-FBpp0290580"/>
<dbReference type="EnsemblMetazoa" id="FBtr0301366">
    <property type="protein sequence ID" value="FBpp0290580"/>
    <property type="gene ID" value="FBgn0032470"/>
</dbReference>
<dbReference type="EnsemblMetazoa" id="FBtr0336855">
    <property type="protein sequence ID" value="FBpp0307812"/>
    <property type="gene ID" value="FBgn0032470"/>
</dbReference>
<dbReference type="GeneID" id="34702"/>
<dbReference type="KEGG" id="dme:Dmel_CG5142"/>
<dbReference type="UCSC" id="CG5142-RB">
    <property type="organism name" value="d. melanogaster"/>
</dbReference>
<dbReference type="AGR" id="FB:FBgn0032470"/>
<dbReference type="CTD" id="34702"/>
<dbReference type="FlyBase" id="FBgn0032470">
    <property type="gene designation" value="Ttc30"/>
</dbReference>
<dbReference type="VEuPathDB" id="VectorBase:FBgn0032470"/>
<dbReference type="eggNOG" id="KOG4340">
    <property type="taxonomic scope" value="Eukaryota"/>
</dbReference>
<dbReference type="GeneTree" id="ENSGT00390000010116"/>
<dbReference type="HOGENOM" id="CLU_023760_0_0_1"/>
<dbReference type="InParanoid" id="Q9VK41"/>
<dbReference type="OMA" id="CCKHELY"/>
<dbReference type="OrthoDB" id="10249577at2759"/>
<dbReference type="PhylomeDB" id="Q9VK41"/>
<dbReference type="BioGRID-ORCS" id="34702">
    <property type="hits" value="0 hits in 3 CRISPR screens"/>
</dbReference>
<dbReference type="GenomeRNAi" id="34702"/>
<dbReference type="PRO" id="PR:Q9VK41"/>
<dbReference type="Proteomes" id="UP000000803">
    <property type="component" value="Chromosome 2L"/>
</dbReference>
<dbReference type="Bgee" id="FBgn0032470">
    <property type="expression patterns" value="Expressed in adult Malpighian tubule stellate cell of main segment in Malpighian tubule and 32 other cell types or tissues"/>
</dbReference>
<dbReference type="ExpressionAtlas" id="Q9VK41">
    <property type="expression patterns" value="baseline and differential"/>
</dbReference>
<dbReference type="GO" id="GO:0005879">
    <property type="term" value="C:axonemal microtubule"/>
    <property type="evidence" value="ECO:0000250"/>
    <property type="project" value="UniProtKB"/>
</dbReference>
<dbReference type="GO" id="GO:0005929">
    <property type="term" value="C:cilium"/>
    <property type="evidence" value="ECO:0000250"/>
    <property type="project" value="UniProtKB"/>
</dbReference>
<dbReference type="GO" id="GO:0030992">
    <property type="term" value="C:intraciliary transport particle B"/>
    <property type="evidence" value="ECO:0000250"/>
    <property type="project" value="FlyBase"/>
</dbReference>
<dbReference type="GO" id="GO:0120170">
    <property type="term" value="F:intraciliary transport particle B binding"/>
    <property type="evidence" value="ECO:0000318"/>
    <property type="project" value="GO_Central"/>
</dbReference>
<dbReference type="GO" id="GO:0060271">
    <property type="term" value="P:cilium assembly"/>
    <property type="evidence" value="ECO:0000270"/>
    <property type="project" value="FlyBase"/>
</dbReference>
<dbReference type="GO" id="GO:0042073">
    <property type="term" value="P:intraciliary transport"/>
    <property type="evidence" value="ECO:0000250"/>
    <property type="project" value="UniProtKB"/>
</dbReference>
<dbReference type="GO" id="GO:0018095">
    <property type="term" value="P:protein polyglutamylation"/>
    <property type="evidence" value="ECO:0000250"/>
    <property type="project" value="UniProtKB"/>
</dbReference>
<dbReference type="FunFam" id="1.25.40.10:FF:000693">
    <property type="entry name" value="Tetratricopeptide repeat domain 30A"/>
    <property type="match status" value="1"/>
</dbReference>
<dbReference type="FunFam" id="1.25.40.10:FF:000623">
    <property type="entry name" value="Tetratricopeptide repeat protein 30 homolog"/>
    <property type="match status" value="1"/>
</dbReference>
<dbReference type="FunFam" id="1.25.40.10:FF:000837">
    <property type="entry name" value="Tetratricopeptide repeat protein 30 homolog"/>
    <property type="match status" value="1"/>
</dbReference>
<dbReference type="Gene3D" id="1.25.40.10">
    <property type="entry name" value="Tetratricopeptide repeat domain"/>
    <property type="match status" value="3"/>
</dbReference>
<dbReference type="InterPro" id="IPR011990">
    <property type="entry name" value="TPR-like_helical_dom_sf"/>
</dbReference>
<dbReference type="InterPro" id="IPR013105">
    <property type="entry name" value="TPR_2"/>
</dbReference>
<dbReference type="InterPro" id="IPR019734">
    <property type="entry name" value="TPR_rpt"/>
</dbReference>
<dbReference type="InterPro" id="IPR039941">
    <property type="entry name" value="TT30"/>
</dbReference>
<dbReference type="PANTHER" id="PTHR20931">
    <property type="entry name" value="TETRATRICOPEPTIDE REPEAT PROTEIN 30"/>
    <property type="match status" value="1"/>
</dbReference>
<dbReference type="PANTHER" id="PTHR20931:SF0">
    <property type="entry name" value="TETRATRICOPEPTIDE REPEAT PROTEIN 30"/>
    <property type="match status" value="1"/>
</dbReference>
<dbReference type="Pfam" id="PF13432">
    <property type="entry name" value="TPR_16"/>
    <property type="match status" value="1"/>
</dbReference>
<dbReference type="Pfam" id="PF07719">
    <property type="entry name" value="TPR_2"/>
    <property type="match status" value="1"/>
</dbReference>
<dbReference type="SMART" id="SM00028">
    <property type="entry name" value="TPR"/>
    <property type="match status" value="3"/>
</dbReference>
<dbReference type="SUPFAM" id="SSF48452">
    <property type="entry name" value="TPR-like"/>
    <property type="match status" value="3"/>
</dbReference>
<dbReference type="PROSITE" id="PS50005">
    <property type="entry name" value="TPR"/>
    <property type="match status" value="2"/>
</dbReference>
<dbReference type="PROSITE" id="PS50293">
    <property type="entry name" value="TPR_REGION"/>
    <property type="match status" value="2"/>
</dbReference>
<comment type="function">
    <text evidence="1">Required for polyglutamylation of axonemal tubulin in sensory cilia. Plays a role in anterograde intraflagellar transport (IFT), the process by which cilia precursors are transported from the base of the cilium to the site of their incorporation at the tip.</text>
</comment>
<comment type="subcellular location">
    <subcellularLocation>
        <location evidence="1">Cell projection</location>
        <location evidence="1">Cilium</location>
    </subcellularLocation>
</comment>
<comment type="similarity">
    <text evidence="2">Belongs to the TTC30/dfy-1/fleer family.</text>
</comment>
<comment type="sequence caution" evidence="2">
    <conflict type="erroneous initiation">
        <sequence resource="EMBL-CDS" id="AAY55178"/>
    </conflict>
    <text>Extended N-terminus.</text>
</comment>
<comment type="sequence caution" evidence="2">
    <conflict type="erroneous initiation">
        <sequence resource="EMBL-CDS" id="AAY55187"/>
    </conflict>
    <text>Extended N-terminus.</text>
</comment>
<comment type="sequence caution" evidence="2">
    <conflict type="erroneous initiation">
        <sequence resource="EMBL-CDS" id="AAY55210"/>
    </conflict>
    <text>Extended N-terminus.</text>
</comment>
<comment type="sequence caution" evidence="2">
    <conflict type="erroneous initiation">
        <sequence resource="EMBL-CDS" id="AAY55218"/>
    </conflict>
    <text>Extended N-terminus.</text>
</comment>
<evidence type="ECO:0000250" key="1"/>
<evidence type="ECO:0000305" key="2"/>
<evidence type="ECO:0000312" key="3">
    <source>
        <dbReference type="FlyBase" id="FBgn0032470"/>
    </source>
</evidence>
<gene>
    <name evidence="3" type="primary">Ttc30</name>
    <name evidence="3" type="ORF">CG5142</name>
</gene>
<proteinExistence type="evidence at transcript level"/>
<feature type="chain" id="PRO_0000333213" description="Tetratricopeptide repeat protein 30 homolog">
    <location>
        <begin position="1"/>
        <end position="655"/>
    </location>
</feature>
<feature type="repeat" description="TPR 1">
    <location>
        <begin position="10"/>
        <end position="43"/>
    </location>
</feature>
<feature type="repeat" description="TPR 2">
    <location>
        <begin position="44"/>
        <end position="76"/>
    </location>
</feature>
<feature type="repeat" description="TPR 3">
    <location>
        <begin position="143"/>
        <end position="176"/>
    </location>
</feature>
<feature type="repeat" description="TPR 4">
    <location>
        <begin position="178"/>
        <end position="210"/>
    </location>
</feature>
<feature type="repeat" description="TPR 5">
    <location>
        <begin position="385"/>
        <end position="418"/>
    </location>
</feature>
<feature type="repeat" description="TPR 6">
    <location>
        <begin position="450"/>
        <end position="484"/>
    </location>
</feature>
<feature type="repeat" description="TPR 7">
    <location>
        <begin position="534"/>
        <end position="567"/>
    </location>
</feature>
<feature type="sequence conflict" description="In Ref. 3; AAY55178." evidence="2" ref="3">
    <original>S</original>
    <variation>A</variation>
    <location>
        <position position="47"/>
    </location>
</feature>
<feature type="sequence conflict" description="In Ref. 3; AAY55178/AAY55187/AAY55210/AAY55218." evidence="2" ref="3">
    <original>H</original>
    <variation>R</variation>
    <location>
        <position position="579"/>
    </location>
</feature>
<accession>Q9VK41</accession>
<accession>Q4V562</accession>
<accession>Q4V594</accession>
<name>TTC30_DROME</name>
<keyword id="KW-0966">Cell projection</keyword>
<keyword id="KW-0969">Cilium</keyword>
<keyword id="KW-0970">Cilium biogenesis/degradation</keyword>
<keyword id="KW-1185">Reference proteome</keyword>
<keyword id="KW-0677">Repeat</keyword>
<keyword id="KW-0802">TPR repeat</keyword>
<organism>
    <name type="scientific">Drosophila melanogaster</name>
    <name type="common">Fruit fly</name>
    <dbReference type="NCBI Taxonomy" id="7227"/>
    <lineage>
        <taxon>Eukaryota</taxon>
        <taxon>Metazoa</taxon>
        <taxon>Ecdysozoa</taxon>
        <taxon>Arthropoda</taxon>
        <taxon>Hexapoda</taxon>
        <taxon>Insecta</taxon>
        <taxon>Pterygota</taxon>
        <taxon>Neoptera</taxon>
        <taxon>Endopterygota</taxon>
        <taxon>Diptera</taxon>
        <taxon>Brachycera</taxon>
        <taxon>Muscomorpha</taxon>
        <taxon>Ephydroidea</taxon>
        <taxon>Drosophilidae</taxon>
        <taxon>Drosophila</taxon>
        <taxon>Sophophora</taxon>
    </lineage>
</organism>